<reference key="1">
    <citation type="journal article" date="2008" name="J. Biol. Chem.">
        <title>Ucma, a novel secreted cartilage-specific protein with implications in osteogenesis.</title>
        <authorList>
            <person name="Surmann-Schmitt C."/>
            <person name="Dietz U."/>
            <person name="Kireva T."/>
            <person name="Adam N."/>
            <person name="Park J."/>
            <person name="Tagariello A."/>
            <person name="Onnerfjord P."/>
            <person name="Heinegard D."/>
            <person name="Schlotzer-Schrehardt U."/>
            <person name="Deutzmann R."/>
            <person name="von der Mark K."/>
            <person name="Stock M."/>
        </authorList>
    </citation>
    <scope>NUCLEOTIDE SEQUENCE [MRNA] (ISOFORM 1)</scope>
    <scope>PROTEIN SEQUENCE OF 65-71</scope>
    <scope>FUNCTION</scope>
    <scope>SULFATION</scope>
    <scope>DEVELOPMENTAL STAGE</scope>
    <scope>TISSUE SPECIFICITY</scope>
    <scope>SUBCELLULAR LOCATION</scope>
    <source>
        <strain>C57BL/6J</strain>
    </source>
</reference>
<reference key="2">
    <citation type="journal article" date="2010" name="Exp. Cell Res.">
        <title>Identification of four alternatively spliced transcripts of the Ucma/GRP gene, encoding a new Gla-containing protein.</title>
        <authorList>
            <person name="Le Jeune M."/>
            <person name="Tomavo N."/>
            <person name="Tian T.V."/>
            <person name="Flourens A."/>
            <person name="Marchand N."/>
            <person name="Camuzeaux B."/>
            <person name="Mallein-Gerin F."/>
            <person name="Duterque-Coquillaud M."/>
        </authorList>
    </citation>
    <scope>NUCLEOTIDE SEQUENCE [MRNA] (ISOFORMS 1; 2; 3 AND 4)</scope>
    <scope>SUBCELLULAR LOCATION</scope>
    <scope>DEVELOPMENTAL STAGE</scope>
    <scope>INDUCTION</scope>
</reference>
<reference key="3">
    <citation type="journal article" date="2005" name="Science">
        <title>The transcriptional landscape of the mammalian genome.</title>
        <authorList>
            <person name="Carninci P."/>
            <person name="Kasukawa T."/>
            <person name="Katayama S."/>
            <person name="Gough J."/>
            <person name="Frith M.C."/>
            <person name="Maeda N."/>
            <person name="Oyama R."/>
            <person name="Ravasi T."/>
            <person name="Lenhard B."/>
            <person name="Wells C."/>
            <person name="Kodzius R."/>
            <person name="Shimokawa K."/>
            <person name="Bajic V.B."/>
            <person name="Brenner S.E."/>
            <person name="Batalov S."/>
            <person name="Forrest A.R."/>
            <person name="Zavolan M."/>
            <person name="Davis M.J."/>
            <person name="Wilming L.G."/>
            <person name="Aidinis V."/>
            <person name="Allen J.E."/>
            <person name="Ambesi-Impiombato A."/>
            <person name="Apweiler R."/>
            <person name="Aturaliya R.N."/>
            <person name="Bailey T.L."/>
            <person name="Bansal M."/>
            <person name="Baxter L."/>
            <person name="Beisel K.W."/>
            <person name="Bersano T."/>
            <person name="Bono H."/>
            <person name="Chalk A.M."/>
            <person name="Chiu K.P."/>
            <person name="Choudhary V."/>
            <person name="Christoffels A."/>
            <person name="Clutterbuck D.R."/>
            <person name="Crowe M.L."/>
            <person name="Dalla E."/>
            <person name="Dalrymple B.P."/>
            <person name="de Bono B."/>
            <person name="Della Gatta G."/>
            <person name="di Bernardo D."/>
            <person name="Down T."/>
            <person name="Engstrom P."/>
            <person name="Fagiolini M."/>
            <person name="Faulkner G."/>
            <person name="Fletcher C.F."/>
            <person name="Fukushima T."/>
            <person name="Furuno M."/>
            <person name="Futaki S."/>
            <person name="Gariboldi M."/>
            <person name="Georgii-Hemming P."/>
            <person name="Gingeras T.R."/>
            <person name="Gojobori T."/>
            <person name="Green R.E."/>
            <person name="Gustincich S."/>
            <person name="Harbers M."/>
            <person name="Hayashi Y."/>
            <person name="Hensch T.K."/>
            <person name="Hirokawa N."/>
            <person name="Hill D."/>
            <person name="Huminiecki L."/>
            <person name="Iacono M."/>
            <person name="Ikeo K."/>
            <person name="Iwama A."/>
            <person name="Ishikawa T."/>
            <person name="Jakt M."/>
            <person name="Kanapin A."/>
            <person name="Katoh M."/>
            <person name="Kawasawa Y."/>
            <person name="Kelso J."/>
            <person name="Kitamura H."/>
            <person name="Kitano H."/>
            <person name="Kollias G."/>
            <person name="Krishnan S.P."/>
            <person name="Kruger A."/>
            <person name="Kummerfeld S.K."/>
            <person name="Kurochkin I.V."/>
            <person name="Lareau L.F."/>
            <person name="Lazarevic D."/>
            <person name="Lipovich L."/>
            <person name="Liu J."/>
            <person name="Liuni S."/>
            <person name="McWilliam S."/>
            <person name="Madan Babu M."/>
            <person name="Madera M."/>
            <person name="Marchionni L."/>
            <person name="Matsuda H."/>
            <person name="Matsuzawa S."/>
            <person name="Miki H."/>
            <person name="Mignone F."/>
            <person name="Miyake S."/>
            <person name="Morris K."/>
            <person name="Mottagui-Tabar S."/>
            <person name="Mulder N."/>
            <person name="Nakano N."/>
            <person name="Nakauchi H."/>
            <person name="Ng P."/>
            <person name="Nilsson R."/>
            <person name="Nishiguchi S."/>
            <person name="Nishikawa S."/>
            <person name="Nori F."/>
            <person name="Ohara O."/>
            <person name="Okazaki Y."/>
            <person name="Orlando V."/>
            <person name="Pang K.C."/>
            <person name="Pavan W.J."/>
            <person name="Pavesi G."/>
            <person name="Pesole G."/>
            <person name="Petrovsky N."/>
            <person name="Piazza S."/>
            <person name="Reed J."/>
            <person name="Reid J.F."/>
            <person name="Ring B.Z."/>
            <person name="Ringwald M."/>
            <person name="Rost B."/>
            <person name="Ruan Y."/>
            <person name="Salzberg S.L."/>
            <person name="Sandelin A."/>
            <person name="Schneider C."/>
            <person name="Schoenbach C."/>
            <person name="Sekiguchi K."/>
            <person name="Semple C.A."/>
            <person name="Seno S."/>
            <person name="Sessa L."/>
            <person name="Sheng Y."/>
            <person name="Shibata Y."/>
            <person name="Shimada H."/>
            <person name="Shimada K."/>
            <person name="Silva D."/>
            <person name="Sinclair B."/>
            <person name="Sperling S."/>
            <person name="Stupka E."/>
            <person name="Sugiura K."/>
            <person name="Sultana R."/>
            <person name="Takenaka Y."/>
            <person name="Taki K."/>
            <person name="Tammoja K."/>
            <person name="Tan S.L."/>
            <person name="Tang S."/>
            <person name="Taylor M.S."/>
            <person name="Tegner J."/>
            <person name="Teichmann S.A."/>
            <person name="Ueda H.R."/>
            <person name="van Nimwegen E."/>
            <person name="Verardo R."/>
            <person name="Wei C.L."/>
            <person name="Yagi K."/>
            <person name="Yamanishi H."/>
            <person name="Zabarovsky E."/>
            <person name="Zhu S."/>
            <person name="Zimmer A."/>
            <person name="Hide W."/>
            <person name="Bult C."/>
            <person name="Grimmond S.M."/>
            <person name="Teasdale R.D."/>
            <person name="Liu E.T."/>
            <person name="Brusic V."/>
            <person name="Quackenbush J."/>
            <person name="Wahlestedt C."/>
            <person name="Mattick J.S."/>
            <person name="Hume D.A."/>
            <person name="Kai C."/>
            <person name="Sasaki D."/>
            <person name="Tomaru Y."/>
            <person name="Fukuda S."/>
            <person name="Kanamori-Katayama M."/>
            <person name="Suzuki M."/>
            <person name="Aoki J."/>
            <person name="Arakawa T."/>
            <person name="Iida J."/>
            <person name="Imamura K."/>
            <person name="Itoh M."/>
            <person name="Kato T."/>
            <person name="Kawaji H."/>
            <person name="Kawagashira N."/>
            <person name="Kawashima T."/>
            <person name="Kojima M."/>
            <person name="Kondo S."/>
            <person name="Konno H."/>
            <person name="Nakano K."/>
            <person name="Ninomiya N."/>
            <person name="Nishio T."/>
            <person name="Okada M."/>
            <person name="Plessy C."/>
            <person name="Shibata K."/>
            <person name="Shiraki T."/>
            <person name="Suzuki S."/>
            <person name="Tagami M."/>
            <person name="Waki K."/>
            <person name="Watahiki A."/>
            <person name="Okamura-Oho Y."/>
            <person name="Suzuki H."/>
            <person name="Kawai J."/>
            <person name="Hayashizaki Y."/>
        </authorList>
    </citation>
    <scope>NUCLEOTIDE SEQUENCE [LARGE SCALE MRNA] (ISOFORM 2)</scope>
    <source>
        <strain>C57BL/6J</strain>
        <tissue>Embryo</tissue>
    </source>
</reference>
<reference key="4">
    <citation type="journal article" date="2009" name="PLoS Biol.">
        <title>Lineage-specific biology revealed by a finished genome assembly of the mouse.</title>
        <authorList>
            <person name="Church D.M."/>
            <person name="Goodstadt L."/>
            <person name="Hillier L.W."/>
            <person name="Zody M.C."/>
            <person name="Goldstein S."/>
            <person name="She X."/>
            <person name="Bult C.J."/>
            <person name="Agarwala R."/>
            <person name="Cherry J.L."/>
            <person name="DiCuccio M."/>
            <person name="Hlavina W."/>
            <person name="Kapustin Y."/>
            <person name="Meric P."/>
            <person name="Maglott D."/>
            <person name="Birtle Z."/>
            <person name="Marques A.C."/>
            <person name="Graves T."/>
            <person name="Zhou S."/>
            <person name="Teague B."/>
            <person name="Potamousis K."/>
            <person name="Churas C."/>
            <person name="Place M."/>
            <person name="Herschleb J."/>
            <person name="Runnheim R."/>
            <person name="Forrest D."/>
            <person name="Amos-Landgraf J."/>
            <person name="Schwartz D.C."/>
            <person name="Cheng Z."/>
            <person name="Lindblad-Toh K."/>
            <person name="Eichler E.E."/>
            <person name="Ponting C.P."/>
        </authorList>
    </citation>
    <scope>NUCLEOTIDE SEQUENCE [LARGE SCALE GENOMIC DNA] (ISOFORMS 1 AND 2)</scope>
    <source>
        <strain>C57BL/6J</strain>
    </source>
</reference>
<reference key="5">
    <citation type="submission" date="2005-07" db="EMBL/GenBank/DDBJ databases">
        <authorList>
            <person name="Mural R.J."/>
            <person name="Adams M.D."/>
            <person name="Myers E.W."/>
            <person name="Smith H.O."/>
            <person name="Venter J.C."/>
        </authorList>
    </citation>
    <scope>NUCLEOTIDE SEQUENCE [LARGE SCALE GENOMIC DNA]</scope>
</reference>
<reference key="6">
    <citation type="journal article" date="2004" name="Genome Res.">
        <title>The status, quality, and expansion of the NIH full-length cDNA project: the Mammalian Gene Collection (MGC).</title>
        <authorList>
            <consortium name="The MGC Project Team"/>
        </authorList>
    </citation>
    <scope>NUCLEOTIDE SEQUENCE [LARGE SCALE MRNA] (ISOFORM 1)</scope>
</reference>
<protein>
    <recommendedName>
        <fullName>Unique cartilage matrix-associated protein</fullName>
    </recommendedName>
    <alternativeName>
        <fullName>Upper zone of growth plate and cartilage matrix associated protein</fullName>
    </alternativeName>
    <component>
        <recommendedName>
            <fullName>Unique cartilage matrix-associated protein C-terminal fragment</fullName>
            <shortName>Ucma-C</shortName>
        </recommendedName>
        <alternativeName>
            <fullName>Gla-rich protein</fullName>
            <shortName>GRP</shortName>
        </alternativeName>
    </component>
</protein>
<feature type="signal peptide" evidence="1">
    <location>
        <begin position="1"/>
        <end position="27"/>
    </location>
</feature>
<feature type="chain" id="PRO_0000347065" description="Unique cartilage matrix-associated protein">
    <location>
        <begin position="28"/>
        <end position="138"/>
    </location>
</feature>
<feature type="propeptide" id="PRO_0000347066" description="Ucma-N" evidence="3">
    <location>
        <begin position="28"/>
        <end position="64"/>
    </location>
</feature>
<feature type="chain" id="PRO_0000347067" description="Unique cartilage matrix-associated protein C-terminal fragment">
    <location>
        <begin position="65"/>
        <end position="138"/>
    </location>
</feature>
<feature type="region of interest" description="Disordered" evidence="2">
    <location>
        <begin position="58"/>
        <end position="78"/>
    </location>
</feature>
<feature type="coiled-coil region" evidence="1">
    <location>
        <begin position="78"/>
        <end position="122"/>
    </location>
</feature>
<feature type="compositionally biased region" description="Basic and acidic residues" evidence="2">
    <location>
        <begin position="67"/>
        <end position="78"/>
    </location>
</feature>
<feature type="splice variant" id="VSP_035051" description="In isoform 2 and isoform 4." evidence="5 6">
    <original>MLQEGTSASVGSRQAAAEGVQEG</original>
    <variation>S</variation>
    <location>
        <begin position="20"/>
        <end position="42"/>
    </location>
</feature>
<feature type="splice variant" id="VSP_040807" description="In isoform 3 and isoform 4." evidence="6">
    <location>
        <begin position="74"/>
        <end position="106"/>
    </location>
</feature>
<proteinExistence type="evidence at protein level"/>
<gene>
    <name type="primary">Ucma</name>
</gene>
<comment type="function">
    <text evidence="3">May be involved in the negative control of osteogenic differentiation of osteochondrogenic precursor cells in peripheral zones of fetal cartilage and at the cartilage-bone interface.</text>
</comment>
<comment type="subcellular location">
    <subcellularLocation>
        <location evidence="3 4">Secreted</location>
        <location evidence="3 4">Extracellular space</location>
        <location evidence="3 4">Extracellular matrix</location>
    </subcellularLocation>
</comment>
<comment type="subcellular location">
    <molecule>Isoform 1</molecule>
    <subcellularLocation>
        <location>Secreted</location>
    </subcellularLocation>
    <subcellularLocation>
        <location>Golgi apparatus</location>
    </subcellularLocation>
</comment>
<comment type="subcellular location">
    <molecule>Isoform 3</molecule>
    <subcellularLocation>
        <location>Secreted</location>
    </subcellularLocation>
    <subcellularLocation>
        <location>Golgi apparatus</location>
    </subcellularLocation>
</comment>
<comment type="subcellular location">
    <molecule>Isoform 2</molecule>
    <subcellularLocation>
        <location evidence="7">Cytoplasm</location>
        <location evidence="7">Cytoskeleton</location>
    </subcellularLocation>
    <text>Colocalizes with aggresomes, which are aggregates of misfolded proteins, at the centrosome.</text>
</comment>
<comment type="subcellular location">
    <molecule>Isoform 4</molecule>
    <subcellularLocation>
        <location evidence="7">Cytoplasm</location>
        <location evidence="7">Cytoskeleton</location>
    </subcellularLocation>
    <text>Colocalizes with aggresomes, which are aggregates of misfolded proteins, at the centrosome.</text>
</comment>
<comment type="alternative products">
    <event type="alternative splicing"/>
    <isoform>
        <id>Q14BU0-1</id>
        <name>1</name>
        <name>Ucma/GRP-F1</name>
        <sequence type="displayed"/>
    </isoform>
    <isoform>
        <id>Q14BU0-2</id>
        <name>2</name>
        <name>Ucma/GRP-F2</name>
        <sequence type="described" ref="VSP_035051"/>
    </isoform>
    <isoform>
        <id>Q14BU0-3</id>
        <name>3</name>
        <name>Ucma/GRP-F3</name>
        <sequence type="described" ref="VSP_040807"/>
    </isoform>
    <isoform>
        <id>Q14BU0-4</id>
        <name>4</name>
        <name>Ucma/GRP-F4</name>
        <sequence type="described" ref="VSP_035051 VSP_040807"/>
    </isoform>
</comment>
<comment type="tissue specificity">
    <text evidence="3">Predominantly expressed in resting chondrocytes.</text>
</comment>
<comment type="developmental stage">
    <text evidence="3 4">Transiently expressed in the developing mouse skeleton between day 13.5 dpc of embryonic development and 5 months of postnatal development. Absent in undifferentiated mesenchymal cells. Isoforms 1 and 3 are significantly increased with the onset of chondrogenesis, whereas Isoforms 2 and 4 are detected at a later stage.</text>
</comment>
<comment type="induction">
    <text evidence="4">Expression inhibited by TGFB1, and weakly inhibited by BMP2.</text>
</comment>
<comment type="PTM">
    <text>Proteolytically cleaved by a furin-like convertase to generate a persistent C-terminal fragment found in almost the entire cartilage matrix, and affecting osteoblast differentiation.</text>
</comment>
<comment type="PTM">
    <text evidence="3">Sulfated on one or two tyrosine residues within the tryptic peptide 121-135.</text>
</comment>
<comment type="similarity">
    <text evidence="7">Belongs to the UCMA family.</text>
</comment>
<dbReference type="EMBL" id="EF529510">
    <property type="protein sequence ID" value="ABP88975.1"/>
    <property type="molecule type" value="mRNA"/>
</dbReference>
<dbReference type="EMBL" id="EU368184">
    <property type="protein sequence ID" value="ABY65726.1"/>
    <property type="molecule type" value="mRNA"/>
</dbReference>
<dbReference type="EMBL" id="FJ217397">
    <property type="protein sequence ID" value="ACO35746.1"/>
    <property type="molecule type" value="mRNA"/>
</dbReference>
<dbReference type="EMBL" id="FJ217398">
    <property type="protein sequence ID" value="ACO35747.1"/>
    <property type="molecule type" value="mRNA"/>
</dbReference>
<dbReference type="EMBL" id="FJ217399">
    <property type="protein sequence ID" value="ACO35748.1"/>
    <property type="molecule type" value="mRNA"/>
</dbReference>
<dbReference type="EMBL" id="FJ217400">
    <property type="protein sequence ID" value="ACO35749.1"/>
    <property type="molecule type" value="mRNA"/>
</dbReference>
<dbReference type="EMBL" id="AK003750">
    <property type="protein sequence ID" value="BAB22978.2"/>
    <property type="molecule type" value="mRNA"/>
</dbReference>
<dbReference type="EMBL" id="AL928662">
    <property type="status" value="NOT_ANNOTATED_CDS"/>
    <property type="molecule type" value="Genomic_DNA"/>
</dbReference>
<dbReference type="EMBL" id="BX682541">
    <property type="status" value="NOT_ANNOTATED_CDS"/>
    <property type="molecule type" value="Genomic_DNA"/>
</dbReference>
<dbReference type="EMBL" id="CH466542">
    <property type="protein sequence ID" value="EDL07955.1"/>
    <property type="molecule type" value="Genomic_DNA"/>
</dbReference>
<dbReference type="EMBL" id="BC115608">
    <property type="protein sequence ID" value="AAI15609.1"/>
    <property type="molecule type" value="mRNA"/>
</dbReference>
<dbReference type="EMBL" id="BC115609">
    <property type="protein sequence ID" value="AAI15610.1"/>
    <property type="molecule type" value="mRNA"/>
</dbReference>
<dbReference type="CCDS" id="CCDS15661.1">
    <molecule id="Q14BU0-2"/>
</dbReference>
<dbReference type="CCDS" id="CCDS50489.1">
    <molecule id="Q14BU0-1"/>
</dbReference>
<dbReference type="CCDS" id="CCDS50490.1">
    <molecule id="Q14BU0-3"/>
</dbReference>
<dbReference type="CCDS" id="CCDS84467.1">
    <molecule id="Q14BU0-4"/>
</dbReference>
<dbReference type="RefSeq" id="NP_001107030.1">
    <molecule id="Q14BU0-1"/>
    <property type="nucleotide sequence ID" value="NM_001113558.2"/>
</dbReference>
<dbReference type="RefSeq" id="NP_001159404.1">
    <molecule id="Q14BU0-3"/>
    <property type="nucleotide sequence ID" value="NM_001165932.1"/>
</dbReference>
<dbReference type="RefSeq" id="NP_001298137.1">
    <molecule id="Q14BU0-4"/>
    <property type="nucleotide sequence ID" value="NM_001311208.1"/>
</dbReference>
<dbReference type="RefSeq" id="NP_081030.1">
    <molecule id="Q14BU0-2"/>
    <property type="nucleotide sequence ID" value="NM_026754.3"/>
</dbReference>
<dbReference type="FunCoup" id="Q14BU0">
    <property type="interactions" value="91"/>
</dbReference>
<dbReference type="STRING" id="10090.ENSMUSP00000110662"/>
<dbReference type="PaxDb" id="10090-ENSMUSP00000110662"/>
<dbReference type="ProteomicsDB" id="298117">
    <molecule id="Q14BU0-1"/>
</dbReference>
<dbReference type="ProteomicsDB" id="298119">
    <molecule id="Q14BU0-3"/>
</dbReference>
<dbReference type="Antibodypedia" id="24782">
    <property type="antibodies" value="77 antibodies from 23 providers"/>
</dbReference>
<dbReference type="Ensembl" id="ENSMUST00000027978.7">
    <molecule id="Q14BU0-2"/>
    <property type="protein sequence ID" value="ENSMUSP00000027978.2"/>
    <property type="gene ID" value="ENSMUSG00000026668.11"/>
</dbReference>
<dbReference type="Ensembl" id="ENSMUST00000115010.9">
    <molecule id="Q14BU0-1"/>
    <property type="protein sequence ID" value="ENSMUSP00000110662.3"/>
    <property type="gene ID" value="ENSMUSG00000026668.11"/>
</dbReference>
<dbReference type="Ensembl" id="ENSMUST00000167607.8">
    <molecule id="Q14BU0-3"/>
    <property type="protein sequence ID" value="ENSMUSP00000126371.2"/>
    <property type="gene ID" value="ENSMUSG00000026668.11"/>
</dbReference>
<dbReference type="Ensembl" id="ENSMUST00000195688.2">
    <molecule id="Q14BU0-4"/>
    <property type="protein sequence ID" value="ENSMUSP00000141304.2"/>
    <property type="gene ID" value="ENSMUSG00000026668.11"/>
</dbReference>
<dbReference type="GeneID" id="68527"/>
<dbReference type="KEGG" id="mmu:68527"/>
<dbReference type="UCSC" id="uc008ife.2">
    <molecule id="Q14BU0-2"/>
    <property type="organism name" value="mouse"/>
</dbReference>
<dbReference type="UCSC" id="uc008iff.2">
    <molecule id="Q14BU0-1"/>
    <property type="organism name" value="mouse"/>
</dbReference>
<dbReference type="UCSC" id="uc012bov.1">
    <molecule id="Q14BU0-3"/>
    <property type="organism name" value="mouse"/>
</dbReference>
<dbReference type="UCSC" id="uc012bow.1">
    <molecule id="Q14BU0-4"/>
    <property type="organism name" value="mouse"/>
</dbReference>
<dbReference type="AGR" id="MGI:1915777"/>
<dbReference type="CTD" id="221044"/>
<dbReference type="MGI" id="MGI:1915777">
    <property type="gene designation" value="Ucma"/>
</dbReference>
<dbReference type="VEuPathDB" id="HostDB:ENSMUSG00000026668"/>
<dbReference type="eggNOG" id="ENOG502S1J9">
    <property type="taxonomic scope" value="Eukaryota"/>
</dbReference>
<dbReference type="GeneTree" id="ENSGT00390000011492"/>
<dbReference type="HOGENOM" id="CLU_153982_0_0_1"/>
<dbReference type="InParanoid" id="Q14BU0"/>
<dbReference type="OMA" id="TMLQEGT"/>
<dbReference type="OrthoDB" id="8907123at2759"/>
<dbReference type="PhylomeDB" id="Q14BU0"/>
<dbReference type="TreeFam" id="TF332568"/>
<dbReference type="BioGRID-ORCS" id="68527">
    <property type="hits" value="3 hits in 77 CRISPR screens"/>
</dbReference>
<dbReference type="PRO" id="PR:Q14BU0"/>
<dbReference type="Proteomes" id="UP000000589">
    <property type="component" value="Chromosome 2"/>
</dbReference>
<dbReference type="RNAct" id="Q14BU0">
    <property type="molecule type" value="protein"/>
</dbReference>
<dbReference type="Bgee" id="ENSMUSG00000026668">
    <property type="expression patterns" value="Expressed in otolith organ and 101 other cell types or tissues"/>
</dbReference>
<dbReference type="GO" id="GO:0016235">
    <property type="term" value="C:aggresome"/>
    <property type="evidence" value="ECO:0000314"/>
    <property type="project" value="MGI"/>
</dbReference>
<dbReference type="GO" id="GO:0005737">
    <property type="term" value="C:cytoplasm"/>
    <property type="evidence" value="ECO:0000314"/>
    <property type="project" value="MGI"/>
</dbReference>
<dbReference type="GO" id="GO:0005856">
    <property type="term" value="C:cytoskeleton"/>
    <property type="evidence" value="ECO:0007669"/>
    <property type="project" value="UniProtKB-SubCell"/>
</dbReference>
<dbReference type="GO" id="GO:0031012">
    <property type="term" value="C:extracellular matrix"/>
    <property type="evidence" value="ECO:0000314"/>
    <property type="project" value="MGI"/>
</dbReference>
<dbReference type="GO" id="GO:0005576">
    <property type="term" value="C:extracellular region"/>
    <property type="evidence" value="ECO:0000304"/>
    <property type="project" value="Reactome"/>
</dbReference>
<dbReference type="GO" id="GO:0005615">
    <property type="term" value="C:extracellular space"/>
    <property type="evidence" value="ECO:0000314"/>
    <property type="project" value="MGI"/>
</dbReference>
<dbReference type="GO" id="GO:0005794">
    <property type="term" value="C:Golgi apparatus"/>
    <property type="evidence" value="ECO:0007669"/>
    <property type="project" value="UniProtKB-SubCell"/>
</dbReference>
<dbReference type="GO" id="GO:0048471">
    <property type="term" value="C:perinuclear region of cytoplasm"/>
    <property type="evidence" value="ECO:0000314"/>
    <property type="project" value="MGI"/>
</dbReference>
<dbReference type="GO" id="GO:0036122">
    <property type="term" value="F:BMP binding"/>
    <property type="evidence" value="ECO:0000266"/>
    <property type="project" value="MGI"/>
</dbReference>
<dbReference type="GO" id="GO:0045668">
    <property type="term" value="P:negative regulation of osteoblast differentiation"/>
    <property type="evidence" value="ECO:0000314"/>
    <property type="project" value="MGI"/>
</dbReference>
<dbReference type="GO" id="GO:0060392">
    <property type="term" value="P:negative regulation of SMAD protein signal transduction"/>
    <property type="evidence" value="ECO:0000315"/>
    <property type="project" value="MGI"/>
</dbReference>
<dbReference type="GO" id="GO:0001649">
    <property type="term" value="P:osteoblast differentiation"/>
    <property type="evidence" value="ECO:0000314"/>
    <property type="project" value="MGI"/>
</dbReference>
<dbReference type="InterPro" id="IPR031386">
    <property type="entry name" value="UCMA"/>
</dbReference>
<dbReference type="PANTHER" id="PTHR28647">
    <property type="entry name" value="UNIQUE CARTILAGE MATRIX-ASSOCIATED PROTEIN"/>
    <property type="match status" value="1"/>
</dbReference>
<dbReference type="PANTHER" id="PTHR28647:SF2">
    <property type="entry name" value="UNIQUE CARTILAGE MATRIX-ASSOCIATED PROTEIN"/>
    <property type="match status" value="1"/>
</dbReference>
<dbReference type="Pfam" id="PF17085">
    <property type="entry name" value="UCMA"/>
    <property type="match status" value="1"/>
</dbReference>
<organism>
    <name type="scientific">Mus musculus</name>
    <name type="common">Mouse</name>
    <dbReference type="NCBI Taxonomy" id="10090"/>
    <lineage>
        <taxon>Eukaryota</taxon>
        <taxon>Metazoa</taxon>
        <taxon>Chordata</taxon>
        <taxon>Craniata</taxon>
        <taxon>Vertebrata</taxon>
        <taxon>Euteleostomi</taxon>
        <taxon>Mammalia</taxon>
        <taxon>Eutheria</taxon>
        <taxon>Euarchontoglires</taxon>
        <taxon>Glires</taxon>
        <taxon>Rodentia</taxon>
        <taxon>Myomorpha</taxon>
        <taxon>Muroidea</taxon>
        <taxon>Muridae</taxon>
        <taxon>Murinae</taxon>
        <taxon>Mus</taxon>
        <taxon>Mus</taxon>
    </lineage>
</organism>
<accession>Q14BU0</accession>
<accession>C9W8R6</accession>
<accession>C9W8R7</accession>
<accession>C9W8R8</accession>
<accession>C9W8R9</accession>
<accession>Q9D1A9</accession>
<keyword id="KW-0025">Alternative splicing</keyword>
<keyword id="KW-0175">Coiled coil</keyword>
<keyword id="KW-0963">Cytoplasm</keyword>
<keyword id="KW-0206">Cytoskeleton</keyword>
<keyword id="KW-0903">Direct protein sequencing</keyword>
<keyword id="KW-0272">Extracellular matrix</keyword>
<keyword id="KW-0333">Golgi apparatus</keyword>
<keyword id="KW-1185">Reference proteome</keyword>
<keyword id="KW-0964">Secreted</keyword>
<keyword id="KW-0732">Signal</keyword>
<keyword id="KW-0765">Sulfation</keyword>
<evidence type="ECO:0000255" key="1"/>
<evidence type="ECO:0000256" key="2">
    <source>
        <dbReference type="SAM" id="MobiDB-lite"/>
    </source>
</evidence>
<evidence type="ECO:0000269" key="3">
    <source>
    </source>
</evidence>
<evidence type="ECO:0000269" key="4">
    <source>
    </source>
</evidence>
<evidence type="ECO:0000303" key="5">
    <source>
    </source>
</evidence>
<evidence type="ECO:0000303" key="6">
    <source>
    </source>
</evidence>
<evidence type="ECO:0000305" key="7"/>
<sequence>MSWRRVILLSSLLALVLLCMLQEGTSASVGSRQAAAEGVQEGVKQKIFMQESDASNFLKRRGKRSPKSRDEVNAENRQRLRDDELRREYYEEQRNEFENFVEEQRDEQEERTREAVEQWRQWHYDGLYPSYLYNRQNI</sequence>
<name>UCMA_MOUSE</name>